<keyword id="KW-0004">4Fe-4S</keyword>
<keyword id="KW-0150">Chloroplast</keyword>
<keyword id="KW-0408">Iron</keyword>
<keyword id="KW-0411">Iron-sulfur</keyword>
<keyword id="KW-0472">Membrane</keyword>
<keyword id="KW-0479">Metal-binding</keyword>
<keyword id="KW-0520">NAD</keyword>
<keyword id="KW-0521">NADP</keyword>
<keyword id="KW-0934">Plastid</keyword>
<keyword id="KW-0618">Plastoquinone</keyword>
<keyword id="KW-0874">Quinone</keyword>
<keyword id="KW-0677">Repeat</keyword>
<keyword id="KW-0793">Thylakoid</keyword>
<keyword id="KW-1278">Translocase</keyword>
<name>NDHI_SILPE</name>
<reference key="1">
    <citation type="submission" date="2003-01" db="EMBL/GenBank/DDBJ databases">
        <title>Chloroplast DNA phylogeny of tribe Heliantheae (Asteraceae).</title>
        <authorList>
            <person name="Panero J.L."/>
            <person name="Baldwin B.G."/>
            <person name="Schilling E.E."/>
            <person name="Clevinger J.A."/>
        </authorList>
    </citation>
    <scope>NUCLEOTIDE SEQUENCE [GENOMIC DNA]</scope>
</reference>
<geneLocation type="chloroplast"/>
<comment type="function">
    <text evidence="1">NDH shuttles electrons from NAD(P)H:plastoquinone, via FMN and iron-sulfur (Fe-S) centers, to quinones in the photosynthetic chain and possibly in a chloroplast respiratory chain. The immediate electron acceptor for the enzyme in this species is believed to be plastoquinone. Couples the redox reaction to proton translocation, and thus conserves the redox energy in a proton gradient.</text>
</comment>
<comment type="catalytic activity">
    <reaction evidence="1">
        <text>a plastoquinone + NADH + (n+1) H(+)(in) = a plastoquinol + NAD(+) + n H(+)(out)</text>
        <dbReference type="Rhea" id="RHEA:42608"/>
        <dbReference type="Rhea" id="RHEA-COMP:9561"/>
        <dbReference type="Rhea" id="RHEA-COMP:9562"/>
        <dbReference type="ChEBI" id="CHEBI:15378"/>
        <dbReference type="ChEBI" id="CHEBI:17757"/>
        <dbReference type="ChEBI" id="CHEBI:57540"/>
        <dbReference type="ChEBI" id="CHEBI:57945"/>
        <dbReference type="ChEBI" id="CHEBI:62192"/>
    </reaction>
</comment>
<comment type="catalytic activity">
    <reaction evidence="1">
        <text>a plastoquinone + NADPH + (n+1) H(+)(in) = a plastoquinol + NADP(+) + n H(+)(out)</text>
        <dbReference type="Rhea" id="RHEA:42612"/>
        <dbReference type="Rhea" id="RHEA-COMP:9561"/>
        <dbReference type="Rhea" id="RHEA-COMP:9562"/>
        <dbReference type="ChEBI" id="CHEBI:15378"/>
        <dbReference type="ChEBI" id="CHEBI:17757"/>
        <dbReference type="ChEBI" id="CHEBI:57783"/>
        <dbReference type="ChEBI" id="CHEBI:58349"/>
        <dbReference type="ChEBI" id="CHEBI:62192"/>
    </reaction>
</comment>
<comment type="cofactor">
    <cofactor evidence="1">
        <name>[4Fe-4S] cluster</name>
        <dbReference type="ChEBI" id="CHEBI:49883"/>
    </cofactor>
    <text evidence="1">Binds 2 [4Fe-4S] clusters per subunit.</text>
</comment>
<comment type="subunit">
    <text evidence="1">NDH is composed of at least 16 different subunits, 5 of which are encoded in the nucleus.</text>
</comment>
<comment type="subcellular location">
    <subcellularLocation>
        <location evidence="1">Plastid</location>
        <location evidence="1">Chloroplast thylakoid membrane</location>
        <topology evidence="1">Peripheral membrane protein</topology>
    </subcellularLocation>
</comment>
<comment type="similarity">
    <text evidence="1">Belongs to the complex I 23 kDa subunit family.</text>
</comment>
<dbReference type="EC" id="7.1.1.-" evidence="1"/>
<dbReference type="EMBL" id="AF383850">
    <property type="protein sequence ID" value="AAN61791.1"/>
    <property type="molecule type" value="Genomic_DNA"/>
</dbReference>
<dbReference type="RefSeq" id="YP_010253907.1">
    <property type="nucleotide sequence ID" value="NC_060408.1"/>
</dbReference>
<dbReference type="SMR" id="Q8HVL3"/>
<dbReference type="GeneID" id="70596241"/>
<dbReference type="GO" id="GO:0009535">
    <property type="term" value="C:chloroplast thylakoid membrane"/>
    <property type="evidence" value="ECO:0007669"/>
    <property type="project" value="UniProtKB-SubCell"/>
</dbReference>
<dbReference type="GO" id="GO:0051539">
    <property type="term" value="F:4 iron, 4 sulfur cluster binding"/>
    <property type="evidence" value="ECO:0007669"/>
    <property type="project" value="UniProtKB-KW"/>
</dbReference>
<dbReference type="GO" id="GO:0005506">
    <property type="term" value="F:iron ion binding"/>
    <property type="evidence" value="ECO:0007669"/>
    <property type="project" value="UniProtKB-UniRule"/>
</dbReference>
<dbReference type="GO" id="GO:0008137">
    <property type="term" value="F:NADH dehydrogenase (ubiquinone) activity"/>
    <property type="evidence" value="ECO:0007669"/>
    <property type="project" value="InterPro"/>
</dbReference>
<dbReference type="GO" id="GO:0048038">
    <property type="term" value="F:quinone binding"/>
    <property type="evidence" value="ECO:0007669"/>
    <property type="project" value="UniProtKB-KW"/>
</dbReference>
<dbReference type="GO" id="GO:0019684">
    <property type="term" value="P:photosynthesis, light reaction"/>
    <property type="evidence" value="ECO:0007669"/>
    <property type="project" value="UniProtKB-UniRule"/>
</dbReference>
<dbReference type="FunFam" id="3.30.70.3270:FF:000006">
    <property type="entry name" value="NAD(P)H-quinone oxidoreductase subunit I, chloroplastic"/>
    <property type="match status" value="1"/>
</dbReference>
<dbReference type="Gene3D" id="3.30.70.3270">
    <property type="match status" value="1"/>
</dbReference>
<dbReference type="HAMAP" id="MF_01351">
    <property type="entry name" value="NDH1_NuoI"/>
    <property type="match status" value="1"/>
</dbReference>
<dbReference type="InterPro" id="IPR017896">
    <property type="entry name" value="4Fe4S_Fe-S-bd"/>
</dbReference>
<dbReference type="InterPro" id="IPR017900">
    <property type="entry name" value="4Fe4S_Fe_S_CS"/>
</dbReference>
<dbReference type="InterPro" id="IPR010226">
    <property type="entry name" value="NADH_quinone_OxRdtase_chainI"/>
</dbReference>
<dbReference type="InterPro" id="IPR004497">
    <property type="entry name" value="NDHI"/>
</dbReference>
<dbReference type="NCBIfam" id="TIGR00403">
    <property type="entry name" value="ndhI"/>
    <property type="match status" value="1"/>
</dbReference>
<dbReference type="NCBIfam" id="TIGR01971">
    <property type="entry name" value="NuoI"/>
    <property type="match status" value="1"/>
</dbReference>
<dbReference type="NCBIfam" id="NF004537">
    <property type="entry name" value="PRK05888.1-3"/>
    <property type="match status" value="1"/>
</dbReference>
<dbReference type="PANTHER" id="PTHR47275">
    <property type="entry name" value="NAD(P)H-QUINONE OXIDOREDUCTASE SUBUNIT I, CHLOROPLASTIC"/>
    <property type="match status" value="1"/>
</dbReference>
<dbReference type="PANTHER" id="PTHR47275:SF1">
    <property type="entry name" value="NAD(P)H-QUINONE OXIDOREDUCTASE SUBUNIT I, CHLOROPLASTIC"/>
    <property type="match status" value="1"/>
</dbReference>
<dbReference type="Pfam" id="PF00037">
    <property type="entry name" value="Fer4"/>
    <property type="match status" value="2"/>
</dbReference>
<dbReference type="SUPFAM" id="SSF54862">
    <property type="entry name" value="4Fe-4S ferredoxins"/>
    <property type="match status" value="1"/>
</dbReference>
<dbReference type="PROSITE" id="PS00198">
    <property type="entry name" value="4FE4S_FER_1"/>
    <property type="match status" value="2"/>
</dbReference>
<dbReference type="PROSITE" id="PS51379">
    <property type="entry name" value="4FE4S_FER_2"/>
    <property type="match status" value="2"/>
</dbReference>
<organism>
    <name type="scientific">Silphium perfoliatum</name>
    <name type="common">Cup plant</name>
    <dbReference type="NCBI Taxonomy" id="53588"/>
    <lineage>
        <taxon>Eukaryota</taxon>
        <taxon>Viridiplantae</taxon>
        <taxon>Streptophyta</taxon>
        <taxon>Embryophyta</taxon>
        <taxon>Tracheophyta</taxon>
        <taxon>Spermatophyta</taxon>
        <taxon>Magnoliopsida</taxon>
        <taxon>eudicotyledons</taxon>
        <taxon>Gunneridae</taxon>
        <taxon>Pentapetalae</taxon>
        <taxon>asterids</taxon>
        <taxon>campanulids</taxon>
        <taxon>Asterales</taxon>
        <taxon>Asteraceae</taxon>
        <taxon>Asteroideae</taxon>
        <taxon>Heliantheae alliance</taxon>
        <taxon>Heliantheae</taxon>
        <taxon>Silphium</taxon>
    </lineage>
</organism>
<accession>Q8HVL3</accession>
<feature type="chain" id="PRO_0000250849" description="NAD(P)H-quinone oxidoreductase subunit I, chloroplastic">
    <location>
        <begin position="1"/>
        <end position="166"/>
    </location>
</feature>
<feature type="domain" description="4Fe-4S ferredoxin-type 1" evidence="1">
    <location>
        <begin position="55"/>
        <end position="84"/>
    </location>
</feature>
<feature type="domain" description="4Fe-4S ferredoxin-type 2" evidence="1">
    <location>
        <begin position="95"/>
        <end position="124"/>
    </location>
</feature>
<feature type="binding site" evidence="1">
    <location>
        <position position="64"/>
    </location>
    <ligand>
        <name>[4Fe-4S] cluster</name>
        <dbReference type="ChEBI" id="CHEBI:49883"/>
        <label>1</label>
    </ligand>
</feature>
<feature type="binding site" evidence="1">
    <location>
        <position position="67"/>
    </location>
    <ligand>
        <name>[4Fe-4S] cluster</name>
        <dbReference type="ChEBI" id="CHEBI:49883"/>
        <label>1</label>
    </ligand>
</feature>
<feature type="binding site" evidence="1">
    <location>
        <position position="70"/>
    </location>
    <ligand>
        <name>[4Fe-4S] cluster</name>
        <dbReference type="ChEBI" id="CHEBI:49883"/>
        <label>1</label>
    </ligand>
</feature>
<feature type="binding site" evidence="1">
    <location>
        <position position="74"/>
    </location>
    <ligand>
        <name>[4Fe-4S] cluster</name>
        <dbReference type="ChEBI" id="CHEBI:49883"/>
        <label>2</label>
    </ligand>
</feature>
<feature type="binding site" evidence="1">
    <location>
        <position position="104"/>
    </location>
    <ligand>
        <name>[4Fe-4S] cluster</name>
        <dbReference type="ChEBI" id="CHEBI:49883"/>
        <label>2</label>
    </ligand>
</feature>
<feature type="binding site" evidence="1">
    <location>
        <position position="107"/>
    </location>
    <ligand>
        <name>[4Fe-4S] cluster</name>
        <dbReference type="ChEBI" id="CHEBI:49883"/>
        <label>2</label>
    </ligand>
</feature>
<feature type="binding site" evidence="1">
    <location>
        <position position="110"/>
    </location>
    <ligand>
        <name>[4Fe-4S] cluster</name>
        <dbReference type="ChEBI" id="CHEBI:49883"/>
        <label>2</label>
    </ligand>
</feature>
<feature type="binding site" evidence="1">
    <location>
        <position position="114"/>
    </location>
    <ligand>
        <name>[4Fe-4S] cluster</name>
        <dbReference type="ChEBI" id="CHEBI:49883"/>
        <label>1</label>
    </ligand>
</feature>
<proteinExistence type="inferred from homology"/>
<gene>
    <name evidence="1" type="primary">ndhI</name>
</gene>
<protein>
    <recommendedName>
        <fullName evidence="1">NAD(P)H-quinone oxidoreductase subunit I, chloroplastic</fullName>
        <ecNumber evidence="1">7.1.1.-</ecNumber>
    </recommendedName>
    <alternativeName>
        <fullName evidence="1">NAD(P)H dehydrogenase subunit I</fullName>
        <shortName evidence="1">NDH subunit I</shortName>
    </alternativeName>
    <alternativeName>
        <fullName evidence="1">NADH-plastoquinone oxidoreductase subunit I</fullName>
    </alternativeName>
</protein>
<evidence type="ECO:0000255" key="1">
    <source>
        <dbReference type="HAMAP-Rule" id="MF_01351"/>
    </source>
</evidence>
<sequence>MFPMVTEFMNYGQQTVRAARYIGQGFMITLSHANRLPVTIQYPYEKLITSERFRGRIHFEFDKCIACEVCVRVCPIDLPVVDWKLETDIRKKRLLNYSIDFGICIFCGNCVEYCPTNCLSMTEEYELSTYDRHELNYNQIALGRLPMSIMDDYTIRTIFNLPEIKT</sequence>